<sequence>MIVLGIESSCDETGLAIYDYSKKKLIADELYSQVKLHKKYGGVVPELASREHIAKLNLLAKKIFKETGLSFEDIDCIAYTAMPGLVGALMVGATFAKTLGLIHNIDTIAVHHLEGHLLSPLLDHNSNIEYPFVALLVSGGHTQLFEVKEFGEYSLLGESIDDAAGEAFDKTTKLLGMGYPGGVEVANLADQATDKSKYILPRPMKNKPNLDFSFSGLKTAVLNTWYDEQDQSLENKANLCYAFQDAAIDVLVSKCAKALQKTKNTRLVISGGVSANKLLRHQLDLLAKNRGYQIFFPPMKYCTDNGAMIALAGAYRYVNGFKDSNLEINVKARSPL</sequence>
<accession>Q14JT2</accession>
<name>TSAD_FRAT1</name>
<comment type="function">
    <text evidence="1">Required for the formation of a threonylcarbamoyl group on adenosine at position 37 (t(6)A37) in tRNAs that read codons beginning with adenine. Is involved in the transfer of the threonylcarbamoyl moiety of threonylcarbamoyl-AMP (TC-AMP) to the N6 group of A37, together with TsaE and TsaB. TsaD likely plays a direct catalytic role in this reaction.</text>
</comment>
<comment type="catalytic activity">
    <reaction evidence="1">
        <text>L-threonylcarbamoyladenylate + adenosine(37) in tRNA = N(6)-L-threonylcarbamoyladenosine(37) in tRNA + AMP + H(+)</text>
        <dbReference type="Rhea" id="RHEA:37059"/>
        <dbReference type="Rhea" id="RHEA-COMP:10162"/>
        <dbReference type="Rhea" id="RHEA-COMP:10163"/>
        <dbReference type="ChEBI" id="CHEBI:15378"/>
        <dbReference type="ChEBI" id="CHEBI:73682"/>
        <dbReference type="ChEBI" id="CHEBI:74411"/>
        <dbReference type="ChEBI" id="CHEBI:74418"/>
        <dbReference type="ChEBI" id="CHEBI:456215"/>
        <dbReference type="EC" id="2.3.1.234"/>
    </reaction>
</comment>
<comment type="cofactor">
    <cofactor evidence="1">
        <name>Fe(2+)</name>
        <dbReference type="ChEBI" id="CHEBI:29033"/>
    </cofactor>
    <text evidence="1">Binds 1 Fe(2+) ion per subunit.</text>
</comment>
<comment type="subcellular location">
    <subcellularLocation>
        <location evidence="1">Cytoplasm</location>
    </subcellularLocation>
</comment>
<comment type="similarity">
    <text evidence="1">Belongs to the KAE1 / TsaD family.</text>
</comment>
<gene>
    <name evidence="1" type="primary">tsaD</name>
    <name type="synonym">gcp</name>
    <name type="ordered locus">FTF0147</name>
</gene>
<keyword id="KW-0012">Acyltransferase</keyword>
<keyword id="KW-0963">Cytoplasm</keyword>
<keyword id="KW-0408">Iron</keyword>
<keyword id="KW-0479">Metal-binding</keyword>
<keyword id="KW-0808">Transferase</keyword>
<keyword id="KW-0819">tRNA processing</keyword>
<organism>
    <name type="scientific">Francisella tularensis subsp. tularensis (strain FSC 198)</name>
    <dbReference type="NCBI Taxonomy" id="393115"/>
    <lineage>
        <taxon>Bacteria</taxon>
        <taxon>Pseudomonadati</taxon>
        <taxon>Pseudomonadota</taxon>
        <taxon>Gammaproteobacteria</taxon>
        <taxon>Thiotrichales</taxon>
        <taxon>Francisellaceae</taxon>
        <taxon>Francisella</taxon>
    </lineage>
</organism>
<feature type="chain" id="PRO_0000303367" description="tRNA N6-adenosine threonylcarbamoyltransferase">
    <location>
        <begin position="1"/>
        <end position="336"/>
    </location>
</feature>
<feature type="binding site" evidence="1">
    <location>
        <position position="112"/>
    </location>
    <ligand>
        <name>Fe cation</name>
        <dbReference type="ChEBI" id="CHEBI:24875"/>
    </ligand>
</feature>
<feature type="binding site" evidence="1">
    <location>
        <position position="116"/>
    </location>
    <ligand>
        <name>Fe cation</name>
        <dbReference type="ChEBI" id="CHEBI:24875"/>
    </ligand>
</feature>
<feature type="binding site" evidence="1">
    <location>
        <begin position="136"/>
        <end position="140"/>
    </location>
    <ligand>
        <name>substrate</name>
    </ligand>
</feature>
<feature type="binding site" evidence="1">
    <location>
        <position position="169"/>
    </location>
    <ligand>
        <name>substrate</name>
    </ligand>
</feature>
<feature type="binding site" evidence="1">
    <location>
        <position position="182"/>
    </location>
    <ligand>
        <name>substrate</name>
    </ligand>
</feature>
<feature type="binding site" evidence="1">
    <location>
        <position position="276"/>
    </location>
    <ligand>
        <name>substrate</name>
    </ligand>
</feature>
<feature type="binding site" evidence="1">
    <location>
        <position position="304"/>
    </location>
    <ligand>
        <name>Fe cation</name>
        <dbReference type="ChEBI" id="CHEBI:24875"/>
    </ligand>
</feature>
<reference key="1">
    <citation type="journal article" date="2007" name="PLoS ONE">
        <title>Genome sequencing shows that European isolates of Francisella tularensis subspecies tularensis are almost identical to US laboratory strain Schu S4.</title>
        <authorList>
            <person name="Chaudhuri R.R."/>
            <person name="Ren C.-P."/>
            <person name="Desmond L."/>
            <person name="Vincent G.A."/>
            <person name="Silman N.J."/>
            <person name="Brehm J.K."/>
            <person name="Elmore M.J."/>
            <person name="Hudson M.J."/>
            <person name="Forsman M."/>
            <person name="Isherwood K.E."/>
            <person name="Gurycova D."/>
            <person name="Minton N.P."/>
            <person name="Titball R.W."/>
            <person name="Pallen M.J."/>
            <person name="Vipond R."/>
        </authorList>
    </citation>
    <scope>NUCLEOTIDE SEQUENCE [LARGE SCALE GENOMIC DNA]</scope>
    <source>
        <strain>FSC 198</strain>
    </source>
</reference>
<dbReference type="EC" id="2.3.1.234" evidence="1"/>
<dbReference type="EMBL" id="AM286280">
    <property type="protein sequence ID" value="CAL08163.1"/>
    <property type="molecule type" value="Genomic_DNA"/>
</dbReference>
<dbReference type="RefSeq" id="WP_003019913.1">
    <property type="nucleotide sequence ID" value="NC_008245.1"/>
</dbReference>
<dbReference type="SMR" id="Q14JT2"/>
<dbReference type="KEGG" id="ftf:FTF0147"/>
<dbReference type="HOGENOM" id="CLU_023208_0_0_6"/>
<dbReference type="GO" id="GO:0005737">
    <property type="term" value="C:cytoplasm"/>
    <property type="evidence" value="ECO:0007669"/>
    <property type="project" value="UniProtKB-SubCell"/>
</dbReference>
<dbReference type="GO" id="GO:0005506">
    <property type="term" value="F:iron ion binding"/>
    <property type="evidence" value="ECO:0007669"/>
    <property type="project" value="UniProtKB-UniRule"/>
</dbReference>
<dbReference type="GO" id="GO:0061711">
    <property type="term" value="F:N(6)-L-threonylcarbamoyladenine synthase activity"/>
    <property type="evidence" value="ECO:0007669"/>
    <property type="project" value="UniProtKB-EC"/>
</dbReference>
<dbReference type="GO" id="GO:0002949">
    <property type="term" value="P:tRNA threonylcarbamoyladenosine modification"/>
    <property type="evidence" value="ECO:0007669"/>
    <property type="project" value="UniProtKB-UniRule"/>
</dbReference>
<dbReference type="CDD" id="cd24133">
    <property type="entry name" value="ASKHA_NBD_TsaD_bac"/>
    <property type="match status" value="1"/>
</dbReference>
<dbReference type="FunFam" id="3.30.420.40:FF:000012">
    <property type="entry name" value="tRNA N6-adenosine threonylcarbamoyltransferase"/>
    <property type="match status" value="1"/>
</dbReference>
<dbReference type="FunFam" id="3.30.420.40:FF:000040">
    <property type="entry name" value="tRNA N6-adenosine threonylcarbamoyltransferase"/>
    <property type="match status" value="1"/>
</dbReference>
<dbReference type="Gene3D" id="3.30.420.40">
    <property type="match status" value="2"/>
</dbReference>
<dbReference type="HAMAP" id="MF_01445">
    <property type="entry name" value="TsaD"/>
    <property type="match status" value="1"/>
</dbReference>
<dbReference type="InterPro" id="IPR043129">
    <property type="entry name" value="ATPase_NBD"/>
</dbReference>
<dbReference type="InterPro" id="IPR000905">
    <property type="entry name" value="Gcp-like_dom"/>
</dbReference>
<dbReference type="InterPro" id="IPR017861">
    <property type="entry name" value="KAE1/TsaD"/>
</dbReference>
<dbReference type="InterPro" id="IPR022450">
    <property type="entry name" value="TsaD"/>
</dbReference>
<dbReference type="NCBIfam" id="TIGR00329">
    <property type="entry name" value="gcp_kae1"/>
    <property type="match status" value="1"/>
</dbReference>
<dbReference type="NCBIfam" id="TIGR03723">
    <property type="entry name" value="T6A_TsaD_YgjD"/>
    <property type="match status" value="1"/>
</dbReference>
<dbReference type="PANTHER" id="PTHR11735">
    <property type="entry name" value="TRNA N6-ADENOSINE THREONYLCARBAMOYLTRANSFERASE"/>
    <property type="match status" value="1"/>
</dbReference>
<dbReference type="PANTHER" id="PTHR11735:SF6">
    <property type="entry name" value="TRNA N6-ADENOSINE THREONYLCARBAMOYLTRANSFERASE, MITOCHONDRIAL"/>
    <property type="match status" value="1"/>
</dbReference>
<dbReference type="Pfam" id="PF00814">
    <property type="entry name" value="TsaD"/>
    <property type="match status" value="1"/>
</dbReference>
<dbReference type="PRINTS" id="PR00789">
    <property type="entry name" value="OSIALOPTASE"/>
</dbReference>
<dbReference type="SUPFAM" id="SSF53067">
    <property type="entry name" value="Actin-like ATPase domain"/>
    <property type="match status" value="2"/>
</dbReference>
<evidence type="ECO:0000255" key="1">
    <source>
        <dbReference type="HAMAP-Rule" id="MF_01445"/>
    </source>
</evidence>
<proteinExistence type="inferred from homology"/>
<protein>
    <recommendedName>
        <fullName evidence="1">tRNA N6-adenosine threonylcarbamoyltransferase</fullName>
        <ecNumber evidence="1">2.3.1.234</ecNumber>
    </recommendedName>
    <alternativeName>
        <fullName evidence="1">N6-L-threonylcarbamoyladenine synthase</fullName>
        <shortName evidence="1">t(6)A synthase</shortName>
    </alternativeName>
    <alternativeName>
        <fullName evidence="1">t(6)A37 threonylcarbamoyladenosine biosynthesis protein TsaD</fullName>
    </alternativeName>
    <alternativeName>
        <fullName evidence="1">tRNA threonylcarbamoyladenosine biosynthesis protein TsaD</fullName>
    </alternativeName>
</protein>